<reference key="1">
    <citation type="submission" date="2007-04" db="EMBL/GenBank/DDBJ databases">
        <title>Complete sequence of Roseiflexus sp. RS-1.</title>
        <authorList>
            <consortium name="US DOE Joint Genome Institute"/>
            <person name="Copeland A."/>
            <person name="Lucas S."/>
            <person name="Lapidus A."/>
            <person name="Barry K."/>
            <person name="Detter J.C."/>
            <person name="Glavina del Rio T."/>
            <person name="Hammon N."/>
            <person name="Israni S."/>
            <person name="Dalin E."/>
            <person name="Tice H."/>
            <person name="Pitluck S."/>
            <person name="Chertkov O."/>
            <person name="Brettin T."/>
            <person name="Bruce D."/>
            <person name="Han C."/>
            <person name="Schmutz J."/>
            <person name="Larimer F."/>
            <person name="Land M."/>
            <person name="Hauser L."/>
            <person name="Kyrpides N."/>
            <person name="Mikhailova N."/>
            <person name="Bryant D.A."/>
            <person name="Richardson P."/>
        </authorList>
    </citation>
    <scope>NUCLEOTIDE SEQUENCE [LARGE SCALE GENOMIC DNA]</scope>
    <source>
        <strain>RS-1</strain>
    </source>
</reference>
<keyword id="KW-0028">Amino-acid biosynthesis</keyword>
<keyword id="KW-0055">Arginine biosynthesis</keyword>
<keyword id="KW-0067">ATP-binding</keyword>
<keyword id="KW-0963">Cytoplasm</keyword>
<keyword id="KW-0418">Kinase</keyword>
<keyword id="KW-0547">Nucleotide-binding</keyword>
<keyword id="KW-0808">Transferase</keyword>
<sequence>MTDPAHHDDRPTLVIKVGGNDLDDATFVAELARVVAAIRPLPVLVHGGGKEIGILQETLGSTPRFVGGLRYTDATALTAAEMVLCGSVSTRLVAALIAAGADALGISGVDRGLIRVVKQEHPAGDLGRVGRPTAVRGEVLRDLLDHGVIPVIAPIALGPDGPYNVNADEAAGAVAAALGVSEAVFVTNVPGVLVKGDVMRYLTRSEIERLIADGTISGGMIPKVRAALTALDAGVHAARITNLEGLLNQGTTIITEREPHE</sequence>
<protein>
    <recommendedName>
        <fullName evidence="1">Acetylglutamate kinase</fullName>
        <ecNumber evidence="1">2.7.2.8</ecNumber>
    </recommendedName>
    <alternativeName>
        <fullName evidence="1">N-acetyl-L-glutamate 5-phosphotransferase</fullName>
    </alternativeName>
    <alternativeName>
        <fullName evidence="1">NAG kinase</fullName>
        <shortName evidence="1">NAGK</shortName>
    </alternativeName>
</protein>
<feature type="chain" id="PRO_0000335659" description="Acetylglutamate kinase">
    <location>
        <begin position="1"/>
        <end position="261"/>
    </location>
</feature>
<feature type="binding site" evidence="1">
    <location>
        <begin position="48"/>
        <end position="49"/>
    </location>
    <ligand>
        <name>substrate</name>
    </ligand>
</feature>
<feature type="binding site" evidence="1">
    <location>
        <position position="70"/>
    </location>
    <ligand>
        <name>substrate</name>
    </ligand>
</feature>
<feature type="binding site" evidence="1">
    <location>
        <position position="164"/>
    </location>
    <ligand>
        <name>substrate</name>
    </ligand>
</feature>
<feature type="site" description="Transition state stabilizer" evidence="1">
    <location>
        <position position="16"/>
    </location>
</feature>
<feature type="site" description="Transition state stabilizer" evidence="1">
    <location>
        <position position="223"/>
    </location>
</feature>
<evidence type="ECO:0000255" key="1">
    <source>
        <dbReference type="HAMAP-Rule" id="MF_00082"/>
    </source>
</evidence>
<gene>
    <name evidence="1" type="primary">argB</name>
    <name type="ordered locus">RoseRS_4053</name>
</gene>
<organism>
    <name type="scientific">Roseiflexus sp. (strain RS-1)</name>
    <dbReference type="NCBI Taxonomy" id="357808"/>
    <lineage>
        <taxon>Bacteria</taxon>
        <taxon>Bacillati</taxon>
        <taxon>Chloroflexota</taxon>
        <taxon>Chloroflexia</taxon>
        <taxon>Chloroflexales</taxon>
        <taxon>Roseiflexineae</taxon>
        <taxon>Roseiflexaceae</taxon>
        <taxon>Roseiflexus</taxon>
    </lineage>
</organism>
<name>ARGB_ROSS1</name>
<accession>A5V0J4</accession>
<proteinExistence type="inferred from homology"/>
<dbReference type="EC" id="2.7.2.8" evidence="1"/>
<dbReference type="EMBL" id="CP000686">
    <property type="protein sequence ID" value="ABQ92397.1"/>
    <property type="molecule type" value="Genomic_DNA"/>
</dbReference>
<dbReference type="RefSeq" id="WP_011958736.1">
    <property type="nucleotide sequence ID" value="NC_009523.1"/>
</dbReference>
<dbReference type="SMR" id="A5V0J4"/>
<dbReference type="STRING" id="357808.RoseRS_4053"/>
<dbReference type="KEGG" id="rrs:RoseRS_4053"/>
<dbReference type="eggNOG" id="COG0548">
    <property type="taxonomic scope" value="Bacteria"/>
</dbReference>
<dbReference type="HOGENOM" id="CLU_053680_1_0_0"/>
<dbReference type="OrthoDB" id="9803155at2"/>
<dbReference type="UniPathway" id="UPA00068">
    <property type="reaction ID" value="UER00107"/>
</dbReference>
<dbReference type="Proteomes" id="UP000006554">
    <property type="component" value="Chromosome"/>
</dbReference>
<dbReference type="GO" id="GO:0005737">
    <property type="term" value="C:cytoplasm"/>
    <property type="evidence" value="ECO:0007669"/>
    <property type="project" value="UniProtKB-SubCell"/>
</dbReference>
<dbReference type="GO" id="GO:0003991">
    <property type="term" value="F:acetylglutamate kinase activity"/>
    <property type="evidence" value="ECO:0007669"/>
    <property type="project" value="UniProtKB-UniRule"/>
</dbReference>
<dbReference type="GO" id="GO:0005524">
    <property type="term" value="F:ATP binding"/>
    <property type="evidence" value="ECO:0007669"/>
    <property type="project" value="UniProtKB-UniRule"/>
</dbReference>
<dbReference type="GO" id="GO:0042450">
    <property type="term" value="P:arginine biosynthetic process via ornithine"/>
    <property type="evidence" value="ECO:0007669"/>
    <property type="project" value="UniProtKB-UniRule"/>
</dbReference>
<dbReference type="GO" id="GO:0006526">
    <property type="term" value="P:L-arginine biosynthetic process"/>
    <property type="evidence" value="ECO:0007669"/>
    <property type="project" value="UniProtKB-UniPathway"/>
</dbReference>
<dbReference type="CDD" id="cd04238">
    <property type="entry name" value="AAK_NAGK-like"/>
    <property type="match status" value="1"/>
</dbReference>
<dbReference type="Gene3D" id="3.40.1160.10">
    <property type="entry name" value="Acetylglutamate kinase-like"/>
    <property type="match status" value="1"/>
</dbReference>
<dbReference type="HAMAP" id="MF_00082">
    <property type="entry name" value="ArgB"/>
    <property type="match status" value="1"/>
</dbReference>
<dbReference type="InterPro" id="IPR036393">
    <property type="entry name" value="AceGlu_kinase-like_sf"/>
</dbReference>
<dbReference type="InterPro" id="IPR004662">
    <property type="entry name" value="AcgluKinase_fam"/>
</dbReference>
<dbReference type="InterPro" id="IPR037528">
    <property type="entry name" value="ArgB"/>
</dbReference>
<dbReference type="InterPro" id="IPR001048">
    <property type="entry name" value="Asp/Glu/Uridylate_kinase"/>
</dbReference>
<dbReference type="NCBIfam" id="TIGR00761">
    <property type="entry name" value="argB"/>
    <property type="match status" value="1"/>
</dbReference>
<dbReference type="PANTHER" id="PTHR23342">
    <property type="entry name" value="N-ACETYLGLUTAMATE SYNTHASE"/>
    <property type="match status" value="1"/>
</dbReference>
<dbReference type="PANTHER" id="PTHR23342:SF0">
    <property type="entry name" value="N-ACETYLGLUTAMATE SYNTHASE, MITOCHONDRIAL"/>
    <property type="match status" value="1"/>
</dbReference>
<dbReference type="Pfam" id="PF00696">
    <property type="entry name" value="AA_kinase"/>
    <property type="match status" value="1"/>
</dbReference>
<dbReference type="PIRSF" id="PIRSF000728">
    <property type="entry name" value="NAGK"/>
    <property type="match status" value="1"/>
</dbReference>
<dbReference type="SUPFAM" id="SSF53633">
    <property type="entry name" value="Carbamate kinase-like"/>
    <property type="match status" value="1"/>
</dbReference>
<comment type="function">
    <text evidence="1">Catalyzes the ATP-dependent phosphorylation of N-acetyl-L-glutamate.</text>
</comment>
<comment type="catalytic activity">
    <reaction evidence="1">
        <text>N-acetyl-L-glutamate + ATP = N-acetyl-L-glutamyl 5-phosphate + ADP</text>
        <dbReference type="Rhea" id="RHEA:14629"/>
        <dbReference type="ChEBI" id="CHEBI:30616"/>
        <dbReference type="ChEBI" id="CHEBI:44337"/>
        <dbReference type="ChEBI" id="CHEBI:57936"/>
        <dbReference type="ChEBI" id="CHEBI:456216"/>
        <dbReference type="EC" id="2.7.2.8"/>
    </reaction>
</comment>
<comment type="pathway">
    <text evidence="1">Amino-acid biosynthesis; L-arginine biosynthesis; N(2)-acetyl-L-ornithine from L-glutamate: step 2/4.</text>
</comment>
<comment type="subcellular location">
    <subcellularLocation>
        <location evidence="1">Cytoplasm</location>
    </subcellularLocation>
</comment>
<comment type="similarity">
    <text evidence="1">Belongs to the acetylglutamate kinase family. ArgB subfamily.</text>
</comment>